<proteinExistence type="evidence at protein level"/>
<name>GID4_MOUSE</name>
<dbReference type="EMBL" id="AK012042">
    <property type="protein sequence ID" value="BAB27989.1"/>
    <property type="molecule type" value="mRNA"/>
</dbReference>
<dbReference type="EMBL" id="AK017120">
    <property type="protein sequence ID" value="BAB30608.1"/>
    <property type="molecule type" value="mRNA"/>
</dbReference>
<dbReference type="EMBL" id="AK039435">
    <property type="protein sequence ID" value="BAC30346.1"/>
    <property type="molecule type" value="mRNA"/>
</dbReference>
<dbReference type="EMBL" id="AK077759">
    <property type="protein sequence ID" value="BAC36995.1"/>
    <property type="molecule type" value="mRNA"/>
</dbReference>
<dbReference type="EMBL" id="AK142753">
    <property type="protein sequence ID" value="BAE25186.1"/>
    <property type="molecule type" value="mRNA"/>
</dbReference>
<dbReference type="EMBL" id="AK164644">
    <property type="protein sequence ID" value="BAE37858.1"/>
    <property type="molecule type" value="mRNA"/>
</dbReference>
<dbReference type="EMBL" id="AL596090">
    <property type="status" value="NOT_ANNOTATED_CDS"/>
    <property type="molecule type" value="Genomic_DNA"/>
</dbReference>
<dbReference type="EMBL" id="BC044901">
    <property type="protein sequence ID" value="AAH44901.1"/>
    <property type="molecule type" value="mRNA"/>
</dbReference>
<dbReference type="EMBL" id="BC046821">
    <property type="protein sequence ID" value="AAH46821.1"/>
    <property type="molecule type" value="mRNA"/>
</dbReference>
<dbReference type="EMBL" id="BC052418">
    <property type="protein sequence ID" value="AAH52418.1"/>
    <property type="molecule type" value="mRNA"/>
</dbReference>
<dbReference type="EMBL" id="AJ404329">
    <property type="protein sequence ID" value="CAC34590.1"/>
    <property type="status" value="ALT_SEQ"/>
    <property type="molecule type" value="mRNA"/>
</dbReference>
<dbReference type="CCDS" id="CCDS24790.1"/>
<dbReference type="RefSeq" id="NP_080033.3">
    <property type="nucleotide sequence ID" value="NM_025757.4"/>
</dbReference>
<dbReference type="SMR" id="Q9CPY6"/>
<dbReference type="FunCoup" id="Q9CPY6">
    <property type="interactions" value="153"/>
</dbReference>
<dbReference type="STRING" id="10090.ENSMUSP00000064926"/>
<dbReference type="PhosphoSitePlus" id="Q9CPY6"/>
<dbReference type="PaxDb" id="10090-ENSMUSP00000064926"/>
<dbReference type="PeptideAtlas" id="Q9CPY6"/>
<dbReference type="ProteomicsDB" id="265745"/>
<dbReference type="Pumba" id="Q9CPY6"/>
<dbReference type="Antibodypedia" id="25602">
    <property type="antibodies" value="83 antibodies from 17 providers"/>
</dbReference>
<dbReference type="DNASU" id="66771"/>
<dbReference type="Ensembl" id="ENSMUST00000070681.7">
    <property type="protein sequence ID" value="ENSMUSP00000064926.7"/>
    <property type="gene ID" value="ENSMUSG00000018415.15"/>
</dbReference>
<dbReference type="Ensembl" id="ENSMUST00000139477.8">
    <property type="protein sequence ID" value="ENSMUSP00000135441.2"/>
    <property type="gene ID" value="ENSMUSG00000018415.15"/>
</dbReference>
<dbReference type="GeneID" id="66771"/>
<dbReference type="KEGG" id="mmu:66771"/>
<dbReference type="UCSC" id="uc007jfw.2">
    <property type="organism name" value="mouse"/>
</dbReference>
<dbReference type="AGR" id="MGI:1914021"/>
<dbReference type="CTD" id="79018"/>
<dbReference type="MGI" id="MGI:1914021">
    <property type="gene designation" value="Gid4"/>
</dbReference>
<dbReference type="VEuPathDB" id="HostDB:ENSMUSG00000018415"/>
<dbReference type="eggNOG" id="KOG4635">
    <property type="taxonomic scope" value="Eukaryota"/>
</dbReference>
<dbReference type="GeneTree" id="ENSGT00500000044930"/>
<dbReference type="HOGENOM" id="CLU_028759_2_0_1"/>
<dbReference type="InParanoid" id="Q9CPY6"/>
<dbReference type="OMA" id="HWSKFQC"/>
<dbReference type="OrthoDB" id="62at2759"/>
<dbReference type="PhylomeDB" id="Q9CPY6"/>
<dbReference type="TreeFam" id="TF323749"/>
<dbReference type="Reactome" id="R-MMU-9861718">
    <property type="pathway name" value="Regulation of pyruvate metabolism"/>
</dbReference>
<dbReference type="BioGRID-ORCS" id="66771">
    <property type="hits" value="3 hits in 77 CRISPR screens"/>
</dbReference>
<dbReference type="ChiTaRS" id="Gid4">
    <property type="organism name" value="mouse"/>
</dbReference>
<dbReference type="PRO" id="PR:Q9CPY6"/>
<dbReference type="Proteomes" id="UP000000589">
    <property type="component" value="Chromosome 11"/>
</dbReference>
<dbReference type="RNAct" id="Q9CPY6">
    <property type="molecule type" value="protein"/>
</dbReference>
<dbReference type="Bgee" id="ENSMUSG00000018415">
    <property type="expression patterns" value="Expressed in interventricular septum and 243 other cell types or tissues"/>
</dbReference>
<dbReference type="GO" id="GO:0000151">
    <property type="term" value="C:ubiquitin ligase complex"/>
    <property type="evidence" value="ECO:0007669"/>
    <property type="project" value="Ensembl"/>
</dbReference>
<dbReference type="InterPro" id="IPR018618">
    <property type="entry name" value="Vacuolar_import/degrad_Vid24"/>
</dbReference>
<dbReference type="PANTHER" id="PTHR14534:SF3">
    <property type="entry name" value="GID COMPLEX SUBUNIT 4 HOMOLOG"/>
    <property type="match status" value="1"/>
</dbReference>
<dbReference type="PANTHER" id="PTHR14534">
    <property type="entry name" value="VACUOLAR IMPORT AND DEGRADATION PROTEIN 24"/>
    <property type="match status" value="1"/>
</dbReference>
<dbReference type="Pfam" id="PF09783">
    <property type="entry name" value="Vac_ImportDeg"/>
    <property type="match status" value="1"/>
</dbReference>
<accession>Q9CPY6</accession>
<accession>Q3TP79</accession>
<accession>Q7TT31</accession>
<accession>Q99JE9</accession>
<sequence>MPVRTECPPPAGASTTSAASLIPPPPINTQQPGVATSLLYSGSKFRGHQKSKGNSYDVEVVLQHVDTGNSYLCGYLKIKGLTEEYPTLTTFFEGEIISKKHPFLTRKWDADEDVDRKHWGKFLAFYQYAKSFNSDDFDYEELKNGDYVFMRWKEQFLVPDHTIKDISGASFAGFYYICFQKSAASIEGYYYHRSSEWYQSLNLTHVPEHSAPIYEFR</sequence>
<gene>
    <name type="primary">Gid4</name>
</gene>
<feature type="chain" id="PRO_0000079303" description="Glucose-induced degradation protein 4 homolog">
    <location>
        <begin position="1"/>
        <end position="217"/>
    </location>
</feature>
<feature type="region of interest" description="Disordered" evidence="2">
    <location>
        <begin position="1"/>
        <end position="27"/>
    </location>
</feature>
<feature type="site" description="Interaction with the N-terminal Pro (Pro/N-degron) of proteins that are targeted for degradation" evidence="1">
    <location>
        <position position="49"/>
    </location>
</feature>
<feature type="site" description="Interaction with the N-terminal Pro (Pro/N-degron) of proteins that are targeted for degradation" evidence="1">
    <location>
        <position position="154"/>
    </location>
</feature>
<feature type="site" description="Interaction with the N-terminal Pro (Pro/N-degron) of proteins that are targeted for degradation" evidence="1">
    <location>
        <position position="175"/>
    </location>
</feature>
<feature type="sequence conflict" description="In Ref. 3; AAH52418." evidence="3" ref="3">
    <original>K</original>
    <variation>E</variation>
    <location>
        <position position="130"/>
    </location>
</feature>
<comment type="function">
    <text evidence="1">Substrate-recognition subunit of the CTLH E3 ubiquitin-protein ligase complex that selectively accepts ubiquitin from UBE2H and mediates ubiquitination and subsequent proteasomal degradation of the transcription factor HBP1. Binds proteins and peptides with a Pro/N-degron consisting of an unmodified N-terminal Pro followed by a small residue, and has the highest affinity for the peptide Pro-Gly-Leu-Trp. Binds peptides with an N-terminal sequence of the type Pro-[Ala,Gly]-[Leu,Met,Gln,Ser,Tyr]-[Glu,Gly,His,Ser,Val,Trp,Tyr]. Does not bind peptides with an acetylated N-terminal Pro residue.</text>
</comment>
<comment type="subunit">
    <text evidence="1">Identified in the CTLH complex that contains GID4, RANBP9 and/or RANBP10, MKLN1, MAEA, RMND5A (or alternatively its paralog RMND5B), GID8, ARMC8, WDR26 and YPEL5. Within this complex, MAEA, RMND5A (or alternatively its paralog RMND5B), GID8, WDR26, and RANBP9 and/or RANBP10 form the catalytic core, while GID4, MKLN1, ARMC8 and YPEL5 have ancillary roles. Interacts with helicases DDX21 and DDX50.</text>
</comment>
<comment type="domain">
    <text evidence="1">The first four residues of target peptides with a free N-terminal Pro (a Pro/N-degron) are bound inside a deep and narrow beta-barrel structure.</text>
</comment>
<comment type="similarity">
    <text evidence="3">Belongs to the GID4/VID24 family.</text>
</comment>
<comment type="caution">
    <text evidence="3">The human orthologous sequence is longer in the N-terminus.</text>
</comment>
<comment type="sequence caution" evidence="3">
    <conflict type="erroneous termination">
        <sequence resource="EMBL-CDS" id="CAC34590"/>
    </conflict>
    <text>Truncated C-terminus.</text>
</comment>
<organism>
    <name type="scientific">Mus musculus</name>
    <name type="common">Mouse</name>
    <dbReference type="NCBI Taxonomy" id="10090"/>
    <lineage>
        <taxon>Eukaryota</taxon>
        <taxon>Metazoa</taxon>
        <taxon>Chordata</taxon>
        <taxon>Craniata</taxon>
        <taxon>Vertebrata</taxon>
        <taxon>Euteleostomi</taxon>
        <taxon>Mammalia</taxon>
        <taxon>Eutheria</taxon>
        <taxon>Euarchontoglires</taxon>
        <taxon>Glires</taxon>
        <taxon>Rodentia</taxon>
        <taxon>Myomorpha</taxon>
        <taxon>Muroidea</taxon>
        <taxon>Muridae</taxon>
        <taxon>Murinae</taxon>
        <taxon>Mus</taxon>
        <taxon>Mus</taxon>
    </lineage>
</organism>
<keyword id="KW-1185">Reference proteome</keyword>
<evidence type="ECO:0000250" key="1">
    <source>
        <dbReference type="UniProtKB" id="Q8IVV7"/>
    </source>
</evidence>
<evidence type="ECO:0000256" key="2">
    <source>
        <dbReference type="SAM" id="MobiDB-lite"/>
    </source>
</evidence>
<evidence type="ECO:0000305" key="3"/>
<reference key="1">
    <citation type="journal article" date="2005" name="Science">
        <title>The transcriptional landscape of the mammalian genome.</title>
        <authorList>
            <person name="Carninci P."/>
            <person name="Kasukawa T."/>
            <person name="Katayama S."/>
            <person name="Gough J."/>
            <person name="Frith M.C."/>
            <person name="Maeda N."/>
            <person name="Oyama R."/>
            <person name="Ravasi T."/>
            <person name="Lenhard B."/>
            <person name="Wells C."/>
            <person name="Kodzius R."/>
            <person name="Shimokawa K."/>
            <person name="Bajic V.B."/>
            <person name="Brenner S.E."/>
            <person name="Batalov S."/>
            <person name="Forrest A.R."/>
            <person name="Zavolan M."/>
            <person name="Davis M.J."/>
            <person name="Wilming L.G."/>
            <person name="Aidinis V."/>
            <person name="Allen J.E."/>
            <person name="Ambesi-Impiombato A."/>
            <person name="Apweiler R."/>
            <person name="Aturaliya R.N."/>
            <person name="Bailey T.L."/>
            <person name="Bansal M."/>
            <person name="Baxter L."/>
            <person name="Beisel K.W."/>
            <person name="Bersano T."/>
            <person name="Bono H."/>
            <person name="Chalk A.M."/>
            <person name="Chiu K.P."/>
            <person name="Choudhary V."/>
            <person name="Christoffels A."/>
            <person name="Clutterbuck D.R."/>
            <person name="Crowe M.L."/>
            <person name="Dalla E."/>
            <person name="Dalrymple B.P."/>
            <person name="de Bono B."/>
            <person name="Della Gatta G."/>
            <person name="di Bernardo D."/>
            <person name="Down T."/>
            <person name="Engstrom P."/>
            <person name="Fagiolini M."/>
            <person name="Faulkner G."/>
            <person name="Fletcher C.F."/>
            <person name="Fukushima T."/>
            <person name="Furuno M."/>
            <person name="Futaki S."/>
            <person name="Gariboldi M."/>
            <person name="Georgii-Hemming P."/>
            <person name="Gingeras T.R."/>
            <person name="Gojobori T."/>
            <person name="Green R.E."/>
            <person name="Gustincich S."/>
            <person name="Harbers M."/>
            <person name="Hayashi Y."/>
            <person name="Hensch T.K."/>
            <person name="Hirokawa N."/>
            <person name="Hill D."/>
            <person name="Huminiecki L."/>
            <person name="Iacono M."/>
            <person name="Ikeo K."/>
            <person name="Iwama A."/>
            <person name="Ishikawa T."/>
            <person name="Jakt M."/>
            <person name="Kanapin A."/>
            <person name="Katoh M."/>
            <person name="Kawasawa Y."/>
            <person name="Kelso J."/>
            <person name="Kitamura H."/>
            <person name="Kitano H."/>
            <person name="Kollias G."/>
            <person name="Krishnan S.P."/>
            <person name="Kruger A."/>
            <person name="Kummerfeld S.K."/>
            <person name="Kurochkin I.V."/>
            <person name="Lareau L.F."/>
            <person name="Lazarevic D."/>
            <person name="Lipovich L."/>
            <person name="Liu J."/>
            <person name="Liuni S."/>
            <person name="McWilliam S."/>
            <person name="Madan Babu M."/>
            <person name="Madera M."/>
            <person name="Marchionni L."/>
            <person name="Matsuda H."/>
            <person name="Matsuzawa S."/>
            <person name="Miki H."/>
            <person name="Mignone F."/>
            <person name="Miyake S."/>
            <person name="Morris K."/>
            <person name="Mottagui-Tabar S."/>
            <person name="Mulder N."/>
            <person name="Nakano N."/>
            <person name="Nakauchi H."/>
            <person name="Ng P."/>
            <person name="Nilsson R."/>
            <person name="Nishiguchi S."/>
            <person name="Nishikawa S."/>
            <person name="Nori F."/>
            <person name="Ohara O."/>
            <person name="Okazaki Y."/>
            <person name="Orlando V."/>
            <person name="Pang K.C."/>
            <person name="Pavan W.J."/>
            <person name="Pavesi G."/>
            <person name="Pesole G."/>
            <person name="Petrovsky N."/>
            <person name="Piazza S."/>
            <person name="Reed J."/>
            <person name="Reid J.F."/>
            <person name="Ring B.Z."/>
            <person name="Ringwald M."/>
            <person name="Rost B."/>
            <person name="Ruan Y."/>
            <person name="Salzberg S.L."/>
            <person name="Sandelin A."/>
            <person name="Schneider C."/>
            <person name="Schoenbach C."/>
            <person name="Sekiguchi K."/>
            <person name="Semple C.A."/>
            <person name="Seno S."/>
            <person name="Sessa L."/>
            <person name="Sheng Y."/>
            <person name="Shibata Y."/>
            <person name="Shimada H."/>
            <person name="Shimada K."/>
            <person name="Silva D."/>
            <person name="Sinclair B."/>
            <person name="Sperling S."/>
            <person name="Stupka E."/>
            <person name="Sugiura K."/>
            <person name="Sultana R."/>
            <person name="Takenaka Y."/>
            <person name="Taki K."/>
            <person name="Tammoja K."/>
            <person name="Tan S.L."/>
            <person name="Tang S."/>
            <person name="Taylor M.S."/>
            <person name="Tegner J."/>
            <person name="Teichmann S.A."/>
            <person name="Ueda H.R."/>
            <person name="van Nimwegen E."/>
            <person name="Verardo R."/>
            <person name="Wei C.L."/>
            <person name="Yagi K."/>
            <person name="Yamanishi H."/>
            <person name="Zabarovsky E."/>
            <person name="Zhu S."/>
            <person name="Zimmer A."/>
            <person name="Hide W."/>
            <person name="Bult C."/>
            <person name="Grimmond S.M."/>
            <person name="Teasdale R.D."/>
            <person name="Liu E.T."/>
            <person name="Brusic V."/>
            <person name="Quackenbush J."/>
            <person name="Wahlestedt C."/>
            <person name="Mattick J.S."/>
            <person name="Hume D.A."/>
            <person name="Kai C."/>
            <person name="Sasaki D."/>
            <person name="Tomaru Y."/>
            <person name="Fukuda S."/>
            <person name="Kanamori-Katayama M."/>
            <person name="Suzuki M."/>
            <person name="Aoki J."/>
            <person name="Arakawa T."/>
            <person name="Iida J."/>
            <person name="Imamura K."/>
            <person name="Itoh M."/>
            <person name="Kato T."/>
            <person name="Kawaji H."/>
            <person name="Kawagashira N."/>
            <person name="Kawashima T."/>
            <person name="Kojima M."/>
            <person name="Kondo S."/>
            <person name="Konno H."/>
            <person name="Nakano K."/>
            <person name="Ninomiya N."/>
            <person name="Nishio T."/>
            <person name="Okada M."/>
            <person name="Plessy C."/>
            <person name="Shibata K."/>
            <person name="Shiraki T."/>
            <person name="Suzuki S."/>
            <person name="Tagami M."/>
            <person name="Waki K."/>
            <person name="Watahiki A."/>
            <person name="Okamura-Oho Y."/>
            <person name="Suzuki H."/>
            <person name="Kawai J."/>
            <person name="Hayashizaki Y."/>
        </authorList>
    </citation>
    <scope>NUCLEOTIDE SEQUENCE [LARGE SCALE MRNA]</scope>
    <source>
        <strain>C57BL/6J</strain>
        <tissue>Heart</tissue>
        <tissue>Spinal cord</tissue>
        <tissue>Stomach</tissue>
        <tissue>Testis</tissue>
    </source>
</reference>
<reference key="2">
    <citation type="journal article" date="2009" name="PLoS Biol.">
        <title>Lineage-specific biology revealed by a finished genome assembly of the mouse.</title>
        <authorList>
            <person name="Church D.M."/>
            <person name="Goodstadt L."/>
            <person name="Hillier L.W."/>
            <person name="Zody M.C."/>
            <person name="Goldstein S."/>
            <person name="She X."/>
            <person name="Bult C.J."/>
            <person name="Agarwala R."/>
            <person name="Cherry J.L."/>
            <person name="DiCuccio M."/>
            <person name="Hlavina W."/>
            <person name="Kapustin Y."/>
            <person name="Meric P."/>
            <person name="Maglott D."/>
            <person name="Birtle Z."/>
            <person name="Marques A.C."/>
            <person name="Graves T."/>
            <person name="Zhou S."/>
            <person name="Teague B."/>
            <person name="Potamousis K."/>
            <person name="Churas C."/>
            <person name="Place M."/>
            <person name="Herschleb J."/>
            <person name="Runnheim R."/>
            <person name="Forrest D."/>
            <person name="Amos-Landgraf J."/>
            <person name="Schwartz D.C."/>
            <person name="Cheng Z."/>
            <person name="Lindblad-Toh K."/>
            <person name="Eichler E.E."/>
            <person name="Ponting C.P."/>
        </authorList>
    </citation>
    <scope>NUCLEOTIDE SEQUENCE [LARGE SCALE GENOMIC DNA]</scope>
    <source>
        <strain>C57BL/6J</strain>
    </source>
</reference>
<reference key="3">
    <citation type="journal article" date="2004" name="Genome Res.">
        <title>The status, quality, and expansion of the NIH full-length cDNA project: the Mammalian Gene Collection (MGC).</title>
        <authorList>
            <consortium name="The MGC Project Team"/>
        </authorList>
    </citation>
    <scope>NUCLEOTIDE SEQUENCE [LARGE SCALE MRNA]</scope>
    <source>
        <strain>C57BL/6J</strain>
        <strain>Czech II</strain>
        <tissue>Brain</tissue>
        <tissue>Mammary tumor</tissue>
    </source>
</reference>
<reference key="4">
    <citation type="submission" date="2000-06" db="EMBL/GenBank/DDBJ databases">
        <title>Full length sequencing of some human and murine muscular transcripts (Telethon Italy project B41).</title>
        <authorList>
            <person name="Ievolella C."/>
            <person name="Zara I."/>
            <person name="Millino C."/>
            <person name="Faulkner G."/>
            <person name="Lanfranchi G."/>
        </authorList>
    </citation>
    <scope>NUCLEOTIDE SEQUENCE [LARGE SCALE MRNA] OF 5-217</scope>
    <source>
        <tissue>Skeletal muscle</tissue>
    </source>
</reference>
<reference key="5">
    <citation type="journal article" date="2010" name="Cell">
        <title>A tissue-specific atlas of mouse protein phosphorylation and expression.</title>
        <authorList>
            <person name="Huttlin E.L."/>
            <person name="Jedrychowski M.P."/>
            <person name="Elias J.E."/>
            <person name="Goswami T."/>
            <person name="Rad R."/>
            <person name="Beausoleil S.A."/>
            <person name="Villen J."/>
            <person name="Haas W."/>
            <person name="Sowa M.E."/>
            <person name="Gygi S.P."/>
        </authorList>
    </citation>
    <scope>IDENTIFICATION BY MASS SPECTROMETRY [LARGE SCALE ANALYSIS]</scope>
    <source>
        <tissue>Brain</tissue>
        <tissue>Testis</tissue>
    </source>
</reference>
<protein>
    <recommendedName>
        <fullName>Glucose-induced degradation protein 4 homolog</fullName>
    </recommendedName>
    <alternativeName>
        <fullName>Vacuolar import and degradation protein 24 homolog</fullName>
    </alternativeName>
</protein>